<organism>
    <name type="scientific">Pectobacterium atrosepticum (strain SCRI 1043 / ATCC BAA-672)</name>
    <name type="common">Erwinia carotovora subsp. atroseptica</name>
    <dbReference type="NCBI Taxonomy" id="218491"/>
    <lineage>
        <taxon>Bacteria</taxon>
        <taxon>Pseudomonadati</taxon>
        <taxon>Pseudomonadota</taxon>
        <taxon>Gammaproteobacteria</taxon>
        <taxon>Enterobacterales</taxon>
        <taxon>Pectobacteriaceae</taxon>
        <taxon>Pectobacterium</taxon>
    </lineage>
</organism>
<feature type="chain" id="PRO_0000138978" description="Multifunctional CCA protein">
    <location>
        <begin position="1"/>
        <end position="414"/>
    </location>
</feature>
<feature type="domain" description="HD" evidence="1">
    <location>
        <begin position="228"/>
        <end position="329"/>
    </location>
</feature>
<feature type="binding site" evidence="1">
    <location>
        <position position="8"/>
    </location>
    <ligand>
        <name>ATP</name>
        <dbReference type="ChEBI" id="CHEBI:30616"/>
    </ligand>
</feature>
<feature type="binding site" evidence="1">
    <location>
        <position position="8"/>
    </location>
    <ligand>
        <name>CTP</name>
        <dbReference type="ChEBI" id="CHEBI:37563"/>
    </ligand>
</feature>
<feature type="binding site" evidence="1">
    <location>
        <position position="11"/>
    </location>
    <ligand>
        <name>ATP</name>
        <dbReference type="ChEBI" id="CHEBI:30616"/>
    </ligand>
</feature>
<feature type="binding site" evidence="1">
    <location>
        <position position="11"/>
    </location>
    <ligand>
        <name>CTP</name>
        <dbReference type="ChEBI" id="CHEBI:37563"/>
    </ligand>
</feature>
<feature type="binding site" evidence="1">
    <location>
        <position position="21"/>
    </location>
    <ligand>
        <name>Mg(2+)</name>
        <dbReference type="ChEBI" id="CHEBI:18420"/>
    </ligand>
</feature>
<feature type="binding site" evidence="1">
    <location>
        <position position="23"/>
    </location>
    <ligand>
        <name>Mg(2+)</name>
        <dbReference type="ChEBI" id="CHEBI:18420"/>
    </ligand>
</feature>
<feature type="binding site" evidence="1">
    <location>
        <position position="91"/>
    </location>
    <ligand>
        <name>ATP</name>
        <dbReference type="ChEBI" id="CHEBI:30616"/>
    </ligand>
</feature>
<feature type="binding site" evidence="1">
    <location>
        <position position="91"/>
    </location>
    <ligand>
        <name>CTP</name>
        <dbReference type="ChEBI" id="CHEBI:37563"/>
    </ligand>
</feature>
<feature type="binding site" evidence="1">
    <location>
        <position position="137"/>
    </location>
    <ligand>
        <name>ATP</name>
        <dbReference type="ChEBI" id="CHEBI:30616"/>
    </ligand>
</feature>
<feature type="binding site" evidence="1">
    <location>
        <position position="137"/>
    </location>
    <ligand>
        <name>CTP</name>
        <dbReference type="ChEBI" id="CHEBI:37563"/>
    </ligand>
</feature>
<feature type="binding site" evidence="1">
    <location>
        <position position="140"/>
    </location>
    <ligand>
        <name>ATP</name>
        <dbReference type="ChEBI" id="CHEBI:30616"/>
    </ligand>
</feature>
<feature type="binding site" evidence="1">
    <location>
        <position position="140"/>
    </location>
    <ligand>
        <name>CTP</name>
        <dbReference type="ChEBI" id="CHEBI:37563"/>
    </ligand>
</feature>
<name>CCA_PECAS</name>
<evidence type="ECO:0000255" key="1">
    <source>
        <dbReference type="HAMAP-Rule" id="MF_01261"/>
    </source>
</evidence>
<dbReference type="EC" id="2.7.7.72" evidence="1"/>
<dbReference type="EC" id="3.1.3.-" evidence="1"/>
<dbReference type="EC" id="3.1.4.-" evidence="1"/>
<dbReference type="EMBL" id="BX950851">
    <property type="protein sequence ID" value="CAG76486.1"/>
    <property type="molecule type" value="Genomic_DNA"/>
</dbReference>
<dbReference type="RefSeq" id="WP_011095091.1">
    <property type="nucleotide sequence ID" value="NC_004547.2"/>
</dbReference>
<dbReference type="SMR" id="Q6D160"/>
<dbReference type="STRING" id="218491.ECA3588"/>
<dbReference type="DNASU" id="2881350"/>
<dbReference type="KEGG" id="eca:ECA3588"/>
<dbReference type="PATRIC" id="fig|218491.5.peg.3639"/>
<dbReference type="eggNOG" id="COG0617">
    <property type="taxonomic scope" value="Bacteria"/>
</dbReference>
<dbReference type="HOGENOM" id="CLU_015961_1_1_6"/>
<dbReference type="OrthoDB" id="9805698at2"/>
<dbReference type="Proteomes" id="UP000007966">
    <property type="component" value="Chromosome"/>
</dbReference>
<dbReference type="GO" id="GO:0005524">
    <property type="term" value="F:ATP binding"/>
    <property type="evidence" value="ECO:0007669"/>
    <property type="project" value="UniProtKB-UniRule"/>
</dbReference>
<dbReference type="GO" id="GO:0004810">
    <property type="term" value="F:CCA tRNA nucleotidyltransferase activity"/>
    <property type="evidence" value="ECO:0007669"/>
    <property type="project" value="UniProtKB-UniRule"/>
</dbReference>
<dbReference type="GO" id="GO:0004112">
    <property type="term" value="F:cyclic-nucleotide phosphodiesterase activity"/>
    <property type="evidence" value="ECO:0007669"/>
    <property type="project" value="UniProtKB-UniRule"/>
</dbReference>
<dbReference type="GO" id="GO:0000287">
    <property type="term" value="F:magnesium ion binding"/>
    <property type="evidence" value="ECO:0007669"/>
    <property type="project" value="UniProtKB-UniRule"/>
</dbReference>
<dbReference type="GO" id="GO:0016791">
    <property type="term" value="F:phosphatase activity"/>
    <property type="evidence" value="ECO:0007669"/>
    <property type="project" value="UniProtKB-UniRule"/>
</dbReference>
<dbReference type="GO" id="GO:0000049">
    <property type="term" value="F:tRNA binding"/>
    <property type="evidence" value="ECO:0007669"/>
    <property type="project" value="UniProtKB-UniRule"/>
</dbReference>
<dbReference type="GO" id="GO:0042245">
    <property type="term" value="P:RNA repair"/>
    <property type="evidence" value="ECO:0007669"/>
    <property type="project" value="UniProtKB-KW"/>
</dbReference>
<dbReference type="GO" id="GO:0001680">
    <property type="term" value="P:tRNA 3'-terminal CCA addition"/>
    <property type="evidence" value="ECO:0007669"/>
    <property type="project" value="UniProtKB-UniRule"/>
</dbReference>
<dbReference type="CDD" id="cd00077">
    <property type="entry name" value="HDc"/>
    <property type="match status" value="1"/>
</dbReference>
<dbReference type="FunFam" id="1.10.3090.10:FF:000001">
    <property type="entry name" value="Multifunctional CCA protein"/>
    <property type="match status" value="1"/>
</dbReference>
<dbReference type="Gene3D" id="3.30.460.10">
    <property type="entry name" value="Beta Polymerase, domain 2"/>
    <property type="match status" value="1"/>
</dbReference>
<dbReference type="Gene3D" id="1.10.3090.10">
    <property type="entry name" value="cca-adding enzyme, domain 2"/>
    <property type="match status" value="1"/>
</dbReference>
<dbReference type="HAMAP" id="MF_01261">
    <property type="entry name" value="CCA_bact_type1"/>
    <property type="match status" value="1"/>
</dbReference>
<dbReference type="HAMAP" id="MF_01262">
    <property type="entry name" value="CCA_bact_type2"/>
    <property type="match status" value="1"/>
</dbReference>
<dbReference type="InterPro" id="IPR012006">
    <property type="entry name" value="CCA_bact"/>
</dbReference>
<dbReference type="InterPro" id="IPR003607">
    <property type="entry name" value="HD/PDEase_dom"/>
</dbReference>
<dbReference type="InterPro" id="IPR006674">
    <property type="entry name" value="HD_domain"/>
</dbReference>
<dbReference type="InterPro" id="IPR043519">
    <property type="entry name" value="NT_sf"/>
</dbReference>
<dbReference type="InterPro" id="IPR002646">
    <property type="entry name" value="PolA_pol_head_dom"/>
</dbReference>
<dbReference type="InterPro" id="IPR032828">
    <property type="entry name" value="PolyA_RNA-bd"/>
</dbReference>
<dbReference type="InterPro" id="IPR050124">
    <property type="entry name" value="tRNA_CCA-adding_enzyme"/>
</dbReference>
<dbReference type="NCBIfam" id="NF008137">
    <property type="entry name" value="PRK10885.1"/>
    <property type="match status" value="1"/>
</dbReference>
<dbReference type="PANTHER" id="PTHR47545">
    <property type="entry name" value="MULTIFUNCTIONAL CCA PROTEIN"/>
    <property type="match status" value="1"/>
</dbReference>
<dbReference type="PANTHER" id="PTHR47545:SF1">
    <property type="entry name" value="MULTIFUNCTIONAL CCA PROTEIN"/>
    <property type="match status" value="1"/>
</dbReference>
<dbReference type="Pfam" id="PF01966">
    <property type="entry name" value="HD"/>
    <property type="match status" value="1"/>
</dbReference>
<dbReference type="Pfam" id="PF01743">
    <property type="entry name" value="PolyA_pol"/>
    <property type="match status" value="1"/>
</dbReference>
<dbReference type="Pfam" id="PF12627">
    <property type="entry name" value="PolyA_pol_RNAbd"/>
    <property type="match status" value="1"/>
</dbReference>
<dbReference type="PIRSF" id="PIRSF000813">
    <property type="entry name" value="CCA_bact"/>
    <property type="match status" value="1"/>
</dbReference>
<dbReference type="SUPFAM" id="SSF81301">
    <property type="entry name" value="Nucleotidyltransferase"/>
    <property type="match status" value="1"/>
</dbReference>
<dbReference type="SUPFAM" id="SSF81891">
    <property type="entry name" value="Poly A polymerase C-terminal region-like"/>
    <property type="match status" value="1"/>
</dbReference>
<dbReference type="PROSITE" id="PS51831">
    <property type="entry name" value="HD"/>
    <property type="match status" value="1"/>
</dbReference>
<comment type="function">
    <text evidence="1">Catalyzes the addition and repair of the essential 3'-terminal CCA sequence in tRNAs without using a nucleic acid template. Adds these three nucleotides in the order of C, C, and A to the tRNA nucleotide-73, using CTP and ATP as substrates and producing inorganic pyrophosphate. tRNA 3'-terminal CCA addition is required both for tRNA processing and repair. Also involved in tRNA surveillance by mediating tandem CCA addition to generate a CCACCA at the 3' terminus of unstable tRNAs. While stable tRNAs receive only 3'-terminal CCA, unstable tRNAs are marked with CCACCA and rapidly degraded.</text>
</comment>
<comment type="catalytic activity">
    <reaction evidence="1">
        <text>a tRNA precursor + 2 CTP + ATP = a tRNA with a 3' CCA end + 3 diphosphate</text>
        <dbReference type="Rhea" id="RHEA:14433"/>
        <dbReference type="Rhea" id="RHEA-COMP:10465"/>
        <dbReference type="Rhea" id="RHEA-COMP:10468"/>
        <dbReference type="ChEBI" id="CHEBI:30616"/>
        <dbReference type="ChEBI" id="CHEBI:33019"/>
        <dbReference type="ChEBI" id="CHEBI:37563"/>
        <dbReference type="ChEBI" id="CHEBI:74896"/>
        <dbReference type="ChEBI" id="CHEBI:83071"/>
        <dbReference type="EC" id="2.7.7.72"/>
    </reaction>
</comment>
<comment type="catalytic activity">
    <reaction evidence="1">
        <text>a tRNA with a 3' CCA end + 2 CTP + ATP = a tRNA with a 3' CCACCA end + 3 diphosphate</text>
        <dbReference type="Rhea" id="RHEA:76235"/>
        <dbReference type="Rhea" id="RHEA-COMP:10468"/>
        <dbReference type="Rhea" id="RHEA-COMP:18655"/>
        <dbReference type="ChEBI" id="CHEBI:30616"/>
        <dbReference type="ChEBI" id="CHEBI:33019"/>
        <dbReference type="ChEBI" id="CHEBI:37563"/>
        <dbReference type="ChEBI" id="CHEBI:83071"/>
        <dbReference type="ChEBI" id="CHEBI:195187"/>
    </reaction>
    <physiologicalReaction direction="left-to-right" evidence="1">
        <dbReference type="Rhea" id="RHEA:76236"/>
    </physiologicalReaction>
</comment>
<comment type="cofactor">
    <cofactor evidence="1">
        <name>Mg(2+)</name>
        <dbReference type="ChEBI" id="CHEBI:18420"/>
    </cofactor>
    <text evidence="1">Magnesium is required for nucleotidyltransferase activity.</text>
</comment>
<comment type="cofactor">
    <cofactor evidence="1">
        <name>Ni(2+)</name>
        <dbReference type="ChEBI" id="CHEBI:49786"/>
    </cofactor>
    <text evidence="1">Nickel for phosphatase activity.</text>
</comment>
<comment type="subunit">
    <text evidence="1">Monomer. Can also form homodimers and oligomers.</text>
</comment>
<comment type="domain">
    <text evidence="1">Comprises two domains: an N-terminal domain containing the nucleotidyltransferase activity and a C-terminal HD domain associated with both phosphodiesterase and phosphatase activities.</text>
</comment>
<comment type="miscellaneous">
    <text evidence="1">A single active site specifically recognizes both ATP and CTP and is responsible for their addition.</text>
</comment>
<comment type="similarity">
    <text evidence="1">Belongs to the tRNA nucleotidyltransferase/poly(A) polymerase family. Bacterial CCA-adding enzyme type 1 subfamily.</text>
</comment>
<proteinExistence type="inferred from homology"/>
<gene>
    <name evidence="1" type="primary">cca</name>
    <name type="ordered locus">ECA3588</name>
</gene>
<keyword id="KW-0067">ATP-binding</keyword>
<keyword id="KW-0378">Hydrolase</keyword>
<keyword id="KW-0460">Magnesium</keyword>
<keyword id="KW-0479">Metal-binding</keyword>
<keyword id="KW-0511">Multifunctional enzyme</keyword>
<keyword id="KW-0533">Nickel</keyword>
<keyword id="KW-0547">Nucleotide-binding</keyword>
<keyword id="KW-0548">Nucleotidyltransferase</keyword>
<keyword id="KW-1185">Reference proteome</keyword>
<keyword id="KW-0692">RNA repair</keyword>
<keyword id="KW-0694">RNA-binding</keyword>
<keyword id="KW-0808">Transferase</keyword>
<keyword id="KW-0819">tRNA processing</keyword>
<protein>
    <recommendedName>
        <fullName evidence="1">Multifunctional CCA protein</fullName>
    </recommendedName>
    <domain>
        <recommendedName>
            <fullName evidence="1">CCA-adding enzyme</fullName>
            <ecNumber evidence="1">2.7.7.72</ecNumber>
        </recommendedName>
        <alternativeName>
            <fullName evidence="1">CCA tRNA nucleotidyltransferase</fullName>
        </alternativeName>
        <alternativeName>
            <fullName evidence="1">tRNA CCA-pyrophosphorylase</fullName>
        </alternativeName>
        <alternativeName>
            <fullName evidence="1">tRNA adenylyl-/cytidylyl-transferase</fullName>
        </alternativeName>
        <alternativeName>
            <fullName evidence="1">tRNA nucleotidyltransferase</fullName>
        </alternativeName>
        <alternativeName>
            <fullName evidence="1">tRNA-NT</fullName>
        </alternativeName>
    </domain>
    <domain>
        <recommendedName>
            <fullName evidence="1">2'-nucleotidase</fullName>
            <ecNumber evidence="1">3.1.3.-</ecNumber>
        </recommendedName>
    </domain>
    <domain>
        <recommendedName>
            <fullName evidence="1">2',3'-cyclic phosphodiesterase</fullName>
            <ecNumber evidence="1">3.1.4.-</ecNumber>
        </recommendedName>
    </domain>
    <domain>
        <recommendedName>
            <fullName evidence="1">Phosphatase</fullName>
            <ecNumber evidence="1">3.1.3.-</ecNumber>
        </recommendedName>
    </domain>
</protein>
<sequence>MKIYLVGGAVRDSLLGLPVTEKDWVVVGATPEHLLAQGYQQVGKDFPVFLHPISRDEYALARTERKSGKGYTGFVCHAEPDVTLEQDLLRRDLTINAIARTERGDLIDPYHGRRDLDNRVLRHVSDAFSEDPLRVLRVARFAARFAHLGFQIAEETMALMQKMAHEGELAFLTPERVWKETEKALGTSSPDVYFQVLRDCGALAVLFPEIDNLYGVPAPAKWHPEIDTGIHTMMTVAMAARLSPDIDVRFATLCHDLGKGLTPPELWPRHLGHGPAGVKLVEALCQRLRVPNPIRDLAKLVAEYHDLVHTVQVLQPKTLLKLFDAIDVWRKPQRLEQLALTSEADARGRTSFEENPYPQGNYLREAFRVASQVSSASVVADGFKGIDVRNELARRRIHALADWKAQQPDVSSTS</sequence>
<reference key="1">
    <citation type="journal article" date="2004" name="Proc. Natl. Acad. Sci. U.S.A.">
        <title>Genome sequence of the enterobacterial phytopathogen Erwinia carotovora subsp. atroseptica and characterization of virulence factors.</title>
        <authorList>
            <person name="Bell K.S."/>
            <person name="Sebaihia M."/>
            <person name="Pritchard L."/>
            <person name="Holden M.T.G."/>
            <person name="Hyman L.J."/>
            <person name="Holeva M.C."/>
            <person name="Thomson N.R."/>
            <person name="Bentley S.D."/>
            <person name="Churcher L.J.C."/>
            <person name="Mungall K."/>
            <person name="Atkin R."/>
            <person name="Bason N."/>
            <person name="Brooks K."/>
            <person name="Chillingworth T."/>
            <person name="Clark K."/>
            <person name="Doggett J."/>
            <person name="Fraser A."/>
            <person name="Hance Z."/>
            <person name="Hauser H."/>
            <person name="Jagels K."/>
            <person name="Moule S."/>
            <person name="Norbertczak H."/>
            <person name="Ormond D."/>
            <person name="Price C."/>
            <person name="Quail M.A."/>
            <person name="Sanders M."/>
            <person name="Walker D."/>
            <person name="Whitehead S."/>
            <person name="Salmond G.P.C."/>
            <person name="Birch P.R.J."/>
            <person name="Parkhill J."/>
            <person name="Toth I.K."/>
        </authorList>
    </citation>
    <scope>NUCLEOTIDE SEQUENCE [LARGE SCALE GENOMIC DNA]</scope>
    <source>
        <strain>SCRI 1043 / ATCC BAA-672</strain>
    </source>
</reference>
<accession>Q6D160</accession>